<dbReference type="EC" id="3.4.23.18"/>
<dbReference type="EMBL" id="ABSU01000003">
    <property type="protein sequence ID" value="EFE35684.1"/>
    <property type="molecule type" value="Genomic_DNA"/>
</dbReference>
<dbReference type="RefSeq" id="XP_003016329.1">
    <property type="nucleotide sequence ID" value="XM_003016283.1"/>
</dbReference>
<dbReference type="SMR" id="D4ANC3"/>
<dbReference type="GlyCosmos" id="D4ANC3">
    <property type="glycosylation" value="2 sites, No reported glycans"/>
</dbReference>
<dbReference type="GeneID" id="9521812"/>
<dbReference type="KEGG" id="abe:ARB_05728"/>
<dbReference type="eggNOG" id="KOG1339">
    <property type="taxonomic scope" value="Eukaryota"/>
</dbReference>
<dbReference type="HOGENOM" id="CLU_013253_0_1_1"/>
<dbReference type="OMA" id="DEEYIGN"/>
<dbReference type="OrthoDB" id="2747330at2759"/>
<dbReference type="Proteomes" id="UP000008866">
    <property type="component" value="Unassembled WGS sequence"/>
</dbReference>
<dbReference type="GO" id="GO:0005576">
    <property type="term" value="C:extracellular region"/>
    <property type="evidence" value="ECO:0007669"/>
    <property type="project" value="UniProtKB-SubCell"/>
</dbReference>
<dbReference type="GO" id="GO:0004190">
    <property type="term" value="F:aspartic-type endopeptidase activity"/>
    <property type="evidence" value="ECO:0007669"/>
    <property type="project" value="UniProtKB-KW"/>
</dbReference>
<dbReference type="GO" id="GO:0006508">
    <property type="term" value="P:proteolysis"/>
    <property type="evidence" value="ECO:0007669"/>
    <property type="project" value="UniProtKB-KW"/>
</dbReference>
<dbReference type="CDD" id="cd06097">
    <property type="entry name" value="Aspergillopepsin_like"/>
    <property type="match status" value="1"/>
</dbReference>
<dbReference type="FunFam" id="2.40.70.10:FF:000026">
    <property type="entry name" value="Endothiapepsin"/>
    <property type="match status" value="1"/>
</dbReference>
<dbReference type="Gene3D" id="2.40.70.10">
    <property type="entry name" value="Acid Proteases"/>
    <property type="match status" value="2"/>
</dbReference>
<dbReference type="InterPro" id="IPR001461">
    <property type="entry name" value="Aspartic_peptidase_A1"/>
</dbReference>
<dbReference type="InterPro" id="IPR001969">
    <property type="entry name" value="Aspartic_peptidase_AS"/>
</dbReference>
<dbReference type="InterPro" id="IPR034163">
    <property type="entry name" value="Aspergillopepsin-like_cat_dom"/>
</dbReference>
<dbReference type="InterPro" id="IPR033121">
    <property type="entry name" value="PEPTIDASE_A1"/>
</dbReference>
<dbReference type="InterPro" id="IPR021109">
    <property type="entry name" value="Peptidase_aspartic_dom_sf"/>
</dbReference>
<dbReference type="PANTHER" id="PTHR47966:SF2">
    <property type="entry name" value="ASPERGILLOPEPSIN-1-RELATED"/>
    <property type="match status" value="1"/>
</dbReference>
<dbReference type="PANTHER" id="PTHR47966">
    <property type="entry name" value="BETA-SITE APP-CLEAVING ENZYME, ISOFORM A-RELATED"/>
    <property type="match status" value="1"/>
</dbReference>
<dbReference type="Pfam" id="PF00026">
    <property type="entry name" value="Asp"/>
    <property type="match status" value="1"/>
</dbReference>
<dbReference type="PRINTS" id="PR00792">
    <property type="entry name" value="PEPSIN"/>
</dbReference>
<dbReference type="SUPFAM" id="SSF50630">
    <property type="entry name" value="Acid proteases"/>
    <property type="match status" value="1"/>
</dbReference>
<dbReference type="PROSITE" id="PS00141">
    <property type="entry name" value="ASP_PROTEASE"/>
    <property type="match status" value="1"/>
</dbReference>
<dbReference type="PROSITE" id="PS51767">
    <property type="entry name" value="PEPTIDASE_A1"/>
    <property type="match status" value="1"/>
</dbReference>
<organism>
    <name type="scientific">Arthroderma benhamiae (strain ATCC MYA-4681 / CBS 112371)</name>
    <name type="common">Trichophyton mentagrophytes</name>
    <dbReference type="NCBI Taxonomy" id="663331"/>
    <lineage>
        <taxon>Eukaryota</taxon>
        <taxon>Fungi</taxon>
        <taxon>Dikarya</taxon>
        <taxon>Ascomycota</taxon>
        <taxon>Pezizomycotina</taxon>
        <taxon>Eurotiomycetes</taxon>
        <taxon>Eurotiomycetidae</taxon>
        <taxon>Onygenales</taxon>
        <taxon>Arthrodermataceae</taxon>
        <taxon>Trichophyton</taxon>
    </lineage>
</organism>
<proteinExistence type="inferred from homology"/>
<protein>
    <recommendedName>
        <fullName>Aspartic protease PEP1</fullName>
        <ecNumber>3.4.23.18</ecNumber>
    </recommendedName>
    <alternativeName>
        <fullName>Aspergillopepsin I</fullName>
    </alternativeName>
</protein>
<evidence type="ECO:0000250" key="1"/>
<evidence type="ECO:0000255" key="2"/>
<evidence type="ECO:0000255" key="3">
    <source>
        <dbReference type="PROSITE-ProRule" id="PRU01103"/>
    </source>
</evidence>
<evidence type="ECO:0000255" key="4">
    <source>
        <dbReference type="PROSITE-ProRule" id="PRU10094"/>
    </source>
</evidence>
<evidence type="ECO:0000305" key="5"/>
<sequence length="403" mass="42980">MVQISQIGAVLAVCSTLTVAAPTKGKARFNVPQVAVPMKAVHHPAVAYARALHKFGMKVPKAVSDAARGSVPTTPTKDDEQYVTQVTVGQGKLNLDLDTGSGDLWVFSTETPKDQSQGHNLYMPTSKSKRLDGYSWEITYGDMSSAGGDVFLDTVSIGNVTASSQAVESAKKVSDQFAKDKATDGLMGLSFSVLNTVQPKPQTTFFDTVLKQLEKPLFTCTLKHGQPGSYDFGYIDDSKHSGEIAYTNVDNSQGWWGFTAESYSIGGGSNSTHSFHGAQHRGTRGSSIDGIADTGTTLMLLSDDVVQEYYGKVQGAKNDQQQGGWVFPCDAKLPDFTLSISGYNAVVPGKFMNYQAVGSVCFGGLQSVGSSGGVPNIFGDVFLKSQFVVWDTEGPRIGFAPQA</sequence>
<feature type="signal peptide" evidence="2">
    <location>
        <begin position="1"/>
        <end position="20"/>
    </location>
</feature>
<feature type="propeptide" id="PRO_0000397712" description="Activation peptide" evidence="1">
    <location>
        <begin position="21"/>
        <end position="67"/>
    </location>
</feature>
<feature type="chain" id="PRO_0000397713" description="Aspartic protease PEP1">
    <location>
        <begin position="68"/>
        <end position="403"/>
    </location>
</feature>
<feature type="domain" description="Peptidase A1" evidence="3">
    <location>
        <begin position="82"/>
        <end position="400"/>
    </location>
</feature>
<feature type="active site" evidence="4">
    <location>
        <position position="98"/>
    </location>
</feature>
<feature type="active site" evidence="4">
    <location>
        <position position="293"/>
    </location>
</feature>
<feature type="glycosylation site" description="N-linked (GlcNAc...) asparagine" evidence="2">
    <location>
        <position position="159"/>
    </location>
</feature>
<feature type="glycosylation site" description="N-linked (GlcNAc...) asparagine" evidence="2">
    <location>
        <position position="270"/>
    </location>
</feature>
<feature type="disulfide bond" evidence="1">
    <location>
        <begin position="329"/>
        <end position="361"/>
    </location>
</feature>
<keyword id="KW-0064">Aspartyl protease</keyword>
<keyword id="KW-1015">Disulfide bond</keyword>
<keyword id="KW-0325">Glycoprotein</keyword>
<keyword id="KW-0378">Hydrolase</keyword>
<keyword id="KW-0645">Protease</keyword>
<keyword id="KW-1185">Reference proteome</keyword>
<keyword id="KW-0964">Secreted</keyword>
<keyword id="KW-0732">Signal</keyword>
<keyword id="KW-0843">Virulence</keyword>
<keyword id="KW-0865">Zymogen</keyword>
<accession>D4ANC3</accession>
<name>PEPA_ARTBC</name>
<reference key="1">
    <citation type="journal article" date="2011" name="Genome Biol.">
        <title>Comparative and functional genomics provide insights into the pathogenicity of dermatophytic fungi.</title>
        <authorList>
            <person name="Burmester A."/>
            <person name="Shelest E."/>
            <person name="Gloeckner G."/>
            <person name="Heddergott C."/>
            <person name="Schindler S."/>
            <person name="Staib P."/>
            <person name="Heidel A."/>
            <person name="Felder M."/>
            <person name="Petzold A."/>
            <person name="Szafranski K."/>
            <person name="Feuermann M."/>
            <person name="Pedruzzi I."/>
            <person name="Priebe S."/>
            <person name="Groth M."/>
            <person name="Winkler R."/>
            <person name="Li W."/>
            <person name="Kniemeyer O."/>
            <person name="Schroeckh V."/>
            <person name="Hertweck C."/>
            <person name="Hube B."/>
            <person name="White T.C."/>
            <person name="Platzer M."/>
            <person name="Guthke R."/>
            <person name="Heitman J."/>
            <person name="Woestemeyer J."/>
            <person name="Zipfel P.F."/>
            <person name="Monod M."/>
            <person name="Brakhage A.A."/>
        </authorList>
    </citation>
    <scope>NUCLEOTIDE SEQUENCE [LARGE SCALE GENOMIC DNA]</scope>
    <source>
        <strain>ATCC MYA-4681 / CBS 112371</strain>
    </source>
</reference>
<comment type="function">
    <text evidence="1">Secreted aspartic endopeptidase that allows assimilation of proteinaceous substrates. Can catalyze hydrolysis of the major structural proteins of basement membrane, elastin, collagen, and laminin. Thought to play a significant role in virulence (By similarity).</text>
</comment>
<comment type="catalytic activity">
    <reaction>
        <text>Hydrolysis of proteins with broad specificity. Generally favors hydrophobic residues in P1 and P1', but also accepts Lys in P1, which leads to activation of trypsinogen. Does not clot milk.</text>
        <dbReference type="EC" id="3.4.23.18"/>
    </reaction>
</comment>
<comment type="subcellular location">
    <subcellularLocation>
        <location evidence="1">Secreted</location>
    </subcellularLocation>
</comment>
<comment type="similarity">
    <text evidence="5">Belongs to the peptidase A1 family.</text>
</comment>
<gene>
    <name type="primary">PEP1</name>
    <name type="ORF">ARB_05728</name>
</gene>